<accession>P14587</accession>
<name>YDH1_PLAFS</name>
<feature type="chain" id="PRO_0000217194" description="Uncharacterized protein 5' to Asp-rich and His-rich proteins">
    <location>
        <begin position="1" status="less than"/>
        <end position="77"/>
    </location>
</feature>
<feature type="non-terminal residue">
    <location>
        <position position="1"/>
    </location>
</feature>
<organism>
    <name type="scientific">Plasmodium falciparum (isolate fcm17 / Senegal)</name>
    <dbReference type="NCBI Taxonomy" id="5845"/>
    <lineage>
        <taxon>Eukaryota</taxon>
        <taxon>Sar</taxon>
        <taxon>Alveolata</taxon>
        <taxon>Apicomplexa</taxon>
        <taxon>Aconoidasida</taxon>
        <taxon>Haemosporida</taxon>
        <taxon>Plasmodiidae</taxon>
        <taxon>Plasmodium</taxon>
        <taxon>Plasmodium (Laverania)</taxon>
    </lineage>
</organism>
<dbReference type="EMBL" id="M17028">
    <property type="protein sequence ID" value="AAA29618.1"/>
    <property type="molecule type" value="Genomic_DNA"/>
</dbReference>
<dbReference type="SMR" id="P14587"/>
<sequence length="77" mass="9269">DPYKERIKSDIRQINESQYLKSLAYKYISGEDYTQYLLLNEVLKDDQDYCTCTRRTIYEESMDNTVEFAKKMYELSA</sequence>
<reference key="1">
    <citation type="journal article" date="1987" name="Biochem. Biophys. Res. Commun.">
        <title>Cloning and sequencing of Plasmodium falciparum DNA fragments containing repetitive regions potentially coding for histidine-rich proteins: identification of two overlapping reading frames.</title>
        <authorList>
            <person name="Lenstra R."/>
            <person name="D'Auriol L."/>
            <person name="Andrieu B."/>
            <person name="le Bras J."/>
            <person name="Galibert F."/>
        </authorList>
    </citation>
    <scope>NUCLEOTIDE SEQUENCE [GENOMIC DNA]</scope>
</reference>
<proteinExistence type="predicted"/>
<protein>
    <recommendedName>
        <fullName>Uncharacterized protein 5' to Asp-rich and His-rich proteins</fullName>
    </recommendedName>
</protein>